<evidence type="ECO:0000255" key="1">
    <source>
        <dbReference type="HAMAP-Rule" id="MF_00108"/>
    </source>
</evidence>
<sequence>MNCAASVSVIMPAAGSGQRFGSQSNKLFAHLDGKPLWQHAIDRFQHRGDVRQIVLAVSEEDESRFREQIAAISSAVPIHLVRGGATRSESVGAALEQVKRFAAESAAANASTQTLVAIHDAARPLVRQSDLDRVIAKAAETGAAILAAPVSGTLKRATGDGSETVDRRNTYVALTPQVFAIDVICQAYARDRGRMATDDAQLVERTSHPVQLVTGSADNLKITFPEDLRIAEAILNECRSEFV</sequence>
<organism>
    <name type="scientific">Rhodopirellula baltica (strain DSM 10527 / NCIMB 13988 / SH1)</name>
    <dbReference type="NCBI Taxonomy" id="243090"/>
    <lineage>
        <taxon>Bacteria</taxon>
        <taxon>Pseudomonadati</taxon>
        <taxon>Planctomycetota</taxon>
        <taxon>Planctomycetia</taxon>
        <taxon>Pirellulales</taxon>
        <taxon>Pirellulaceae</taxon>
        <taxon>Rhodopirellula</taxon>
    </lineage>
</organism>
<keyword id="KW-0414">Isoprene biosynthesis</keyword>
<keyword id="KW-0548">Nucleotidyltransferase</keyword>
<keyword id="KW-1185">Reference proteome</keyword>
<keyword id="KW-0808">Transferase</keyword>
<proteinExistence type="inferred from homology"/>
<comment type="function">
    <text evidence="1">Catalyzes the formation of 4-diphosphocytidyl-2-C-methyl-D-erythritol from CTP and 2-C-methyl-D-erythritol 4-phosphate (MEP).</text>
</comment>
<comment type="catalytic activity">
    <reaction evidence="1">
        <text>2-C-methyl-D-erythritol 4-phosphate + CTP + H(+) = 4-CDP-2-C-methyl-D-erythritol + diphosphate</text>
        <dbReference type="Rhea" id="RHEA:13429"/>
        <dbReference type="ChEBI" id="CHEBI:15378"/>
        <dbReference type="ChEBI" id="CHEBI:33019"/>
        <dbReference type="ChEBI" id="CHEBI:37563"/>
        <dbReference type="ChEBI" id="CHEBI:57823"/>
        <dbReference type="ChEBI" id="CHEBI:58262"/>
        <dbReference type="EC" id="2.7.7.60"/>
    </reaction>
</comment>
<comment type="pathway">
    <text evidence="1">Isoprenoid biosynthesis; isopentenyl diphosphate biosynthesis via DXP pathway; isopentenyl diphosphate from 1-deoxy-D-xylulose 5-phosphate: step 2/6.</text>
</comment>
<comment type="similarity">
    <text evidence="1">Belongs to the IspD/TarI cytidylyltransferase family. IspD subfamily.</text>
</comment>
<protein>
    <recommendedName>
        <fullName evidence="1">2-C-methyl-D-erythritol 4-phosphate cytidylyltransferase</fullName>
        <ecNumber evidence="1">2.7.7.60</ecNumber>
    </recommendedName>
    <alternativeName>
        <fullName evidence="1">4-diphosphocytidyl-2C-methyl-D-erythritol synthase</fullName>
    </alternativeName>
    <alternativeName>
        <fullName evidence="1">MEP cytidylyltransferase</fullName>
        <shortName evidence="1">MCT</shortName>
    </alternativeName>
</protein>
<name>ISPD_RHOBA</name>
<gene>
    <name evidence="1" type="primary">ispD</name>
    <name type="ordered locus">RB9133</name>
</gene>
<accession>Q7UM15</accession>
<dbReference type="EC" id="2.7.7.60" evidence="1"/>
<dbReference type="EMBL" id="BX294149">
    <property type="protein sequence ID" value="CAD76102.1"/>
    <property type="molecule type" value="Genomic_DNA"/>
</dbReference>
<dbReference type="RefSeq" id="NP_868725.1">
    <property type="nucleotide sequence ID" value="NC_005027.1"/>
</dbReference>
<dbReference type="RefSeq" id="WP_011122160.1">
    <property type="nucleotide sequence ID" value="NC_005027.1"/>
</dbReference>
<dbReference type="SMR" id="Q7UM15"/>
<dbReference type="FunCoup" id="Q7UM15">
    <property type="interactions" value="438"/>
</dbReference>
<dbReference type="STRING" id="243090.RB9133"/>
<dbReference type="EnsemblBacteria" id="CAD76102">
    <property type="protein sequence ID" value="CAD76102"/>
    <property type="gene ID" value="RB9133"/>
</dbReference>
<dbReference type="KEGG" id="rba:RB9133"/>
<dbReference type="PATRIC" id="fig|243090.15.peg.4377"/>
<dbReference type="eggNOG" id="COG1211">
    <property type="taxonomic scope" value="Bacteria"/>
</dbReference>
<dbReference type="HOGENOM" id="CLU_061281_2_2_0"/>
<dbReference type="InParanoid" id="Q7UM15"/>
<dbReference type="OrthoDB" id="9806837at2"/>
<dbReference type="UniPathway" id="UPA00056">
    <property type="reaction ID" value="UER00093"/>
</dbReference>
<dbReference type="Proteomes" id="UP000001025">
    <property type="component" value="Chromosome"/>
</dbReference>
<dbReference type="GO" id="GO:0050518">
    <property type="term" value="F:2-C-methyl-D-erythritol 4-phosphate cytidylyltransferase activity"/>
    <property type="evidence" value="ECO:0000318"/>
    <property type="project" value="GO_Central"/>
</dbReference>
<dbReference type="GO" id="GO:0019288">
    <property type="term" value="P:isopentenyl diphosphate biosynthetic process, methylerythritol 4-phosphate pathway"/>
    <property type="evidence" value="ECO:0007669"/>
    <property type="project" value="UniProtKB-UniRule"/>
</dbReference>
<dbReference type="CDD" id="cd02516">
    <property type="entry name" value="CDP-ME_synthetase"/>
    <property type="match status" value="1"/>
</dbReference>
<dbReference type="FunFam" id="3.90.550.10:FF:000003">
    <property type="entry name" value="2-C-methyl-D-erythritol 4-phosphate cytidylyltransferase"/>
    <property type="match status" value="1"/>
</dbReference>
<dbReference type="Gene3D" id="3.90.550.10">
    <property type="entry name" value="Spore Coat Polysaccharide Biosynthesis Protein SpsA, Chain A"/>
    <property type="match status" value="1"/>
</dbReference>
<dbReference type="HAMAP" id="MF_00108">
    <property type="entry name" value="IspD"/>
    <property type="match status" value="1"/>
</dbReference>
<dbReference type="InterPro" id="IPR001228">
    <property type="entry name" value="IspD"/>
</dbReference>
<dbReference type="InterPro" id="IPR034683">
    <property type="entry name" value="IspD/TarI"/>
</dbReference>
<dbReference type="InterPro" id="IPR050088">
    <property type="entry name" value="IspD/TarI_cytidylyltransf_bact"/>
</dbReference>
<dbReference type="InterPro" id="IPR029044">
    <property type="entry name" value="Nucleotide-diphossugar_trans"/>
</dbReference>
<dbReference type="NCBIfam" id="TIGR00453">
    <property type="entry name" value="ispD"/>
    <property type="match status" value="1"/>
</dbReference>
<dbReference type="PANTHER" id="PTHR32125">
    <property type="entry name" value="2-C-METHYL-D-ERYTHRITOL 4-PHOSPHATE CYTIDYLYLTRANSFERASE, CHLOROPLASTIC"/>
    <property type="match status" value="1"/>
</dbReference>
<dbReference type="PANTHER" id="PTHR32125:SF4">
    <property type="entry name" value="2-C-METHYL-D-ERYTHRITOL 4-PHOSPHATE CYTIDYLYLTRANSFERASE, CHLOROPLASTIC"/>
    <property type="match status" value="1"/>
</dbReference>
<dbReference type="Pfam" id="PF01128">
    <property type="entry name" value="IspD"/>
    <property type="match status" value="1"/>
</dbReference>
<dbReference type="SUPFAM" id="SSF53448">
    <property type="entry name" value="Nucleotide-diphospho-sugar transferases"/>
    <property type="match status" value="1"/>
</dbReference>
<reference key="1">
    <citation type="journal article" date="2003" name="Proc. Natl. Acad. Sci. U.S.A.">
        <title>Complete genome sequence of the marine planctomycete Pirellula sp. strain 1.</title>
        <authorList>
            <person name="Gloeckner F.O."/>
            <person name="Kube M."/>
            <person name="Bauer M."/>
            <person name="Teeling H."/>
            <person name="Lombardot T."/>
            <person name="Ludwig W."/>
            <person name="Gade D."/>
            <person name="Beck A."/>
            <person name="Borzym K."/>
            <person name="Heitmann K."/>
            <person name="Rabus R."/>
            <person name="Schlesner H."/>
            <person name="Amann R."/>
            <person name="Reinhardt R."/>
        </authorList>
    </citation>
    <scope>NUCLEOTIDE SEQUENCE [LARGE SCALE GENOMIC DNA]</scope>
    <source>
        <strain>DSM 10527 / NCIMB 13988 / SH1</strain>
    </source>
</reference>
<feature type="chain" id="PRO_0000075608" description="2-C-methyl-D-erythritol 4-phosphate cytidylyltransferase">
    <location>
        <begin position="1"/>
        <end position="243"/>
    </location>
</feature>
<feature type="site" description="Transition state stabilizer" evidence="1">
    <location>
        <position position="19"/>
    </location>
</feature>
<feature type="site" description="Transition state stabilizer" evidence="1">
    <location>
        <position position="26"/>
    </location>
</feature>
<feature type="site" description="Positions MEP for the nucleophilic attack" evidence="1">
    <location>
        <position position="167"/>
    </location>
</feature>
<feature type="site" description="Positions MEP for the nucleophilic attack" evidence="1">
    <location>
        <position position="221"/>
    </location>
</feature>